<gene>
    <name type="ordered locus">Bpet3099</name>
</gene>
<proteinExistence type="inferred from homology"/>
<organism>
    <name type="scientific">Bordetella petrii (strain ATCC BAA-461 / DSM 12804 / CCUG 43448)</name>
    <dbReference type="NCBI Taxonomy" id="340100"/>
    <lineage>
        <taxon>Bacteria</taxon>
        <taxon>Pseudomonadati</taxon>
        <taxon>Pseudomonadota</taxon>
        <taxon>Betaproteobacteria</taxon>
        <taxon>Burkholderiales</taxon>
        <taxon>Alcaligenaceae</taxon>
        <taxon>Bordetella</taxon>
    </lineage>
</organism>
<dbReference type="EMBL" id="AM902716">
    <property type="protein sequence ID" value="CAP43441.1"/>
    <property type="molecule type" value="Genomic_DNA"/>
</dbReference>
<dbReference type="SMR" id="A9ITM2"/>
<dbReference type="STRING" id="94624.Bpet3099"/>
<dbReference type="KEGG" id="bpt:Bpet3099"/>
<dbReference type="eggNOG" id="COG0217">
    <property type="taxonomic scope" value="Bacteria"/>
</dbReference>
<dbReference type="Proteomes" id="UP000001225">
    <property type="component" value="Chromosome"/>
</dbReference>
<dbReference type="GO" id="GO:0005829">
    <property type="term" value="C:cytosol"/>
    <property type="evidence" value="ECO:0007669"/>
    <property type="project" value="TreeGrafter"/>
</dbReference>
<dbReference type="GO" id="GO:0003677">
    <property type="term" value="F:DNA binding"/>
    <property type="evidence" value="ECO:0007669"/>
    <property type="project" value="UniProtKB-UniRule"/>
</dbReference>
<dbReference type="GO" id="GO:0006355">
    <property type="term" value="P:regulation of DNA-templated transcription"/>
    <property type="evidence" value="ECO:0007669"/>
    <property type="project" value="UniProtKB-UniRule"/>
</dbReference>
<dbReference type="FunFam" id="1.10.10.200:FF:000001">
    <property type="entry name" value="Probable transcriptional regulatory protein YebC"/>
    <property type="match status" value="1"/>
</dbReference>
<dbReference type="FunFam" id="3.30.70.980:FF:000002">
    <property type="entry name" value="Probable transcriptional regulatory protein YebC"/>
    <property type="match status" value="1"/>
</dbReference>
<dbReference type="Gene3D" id="1.10.10.200">
    <property type="match status" value="1"/>
</dbReference>
<dbReference type="Gene3D" id="3.30.70.980">
    <property type="match status" value="2"/>
</dbReference>
<dbReference type="HAMAP" id="MF_00693">
    <property type="entry name" value="Transcrip_reg_TACO1"/>
    <property type="match status" value="1"/>
</dbReference>
<dbReference type="InterPro" id="IPR017856">
    <property type="entry name" value="Integrase-like_N"/>
</dbReference>
<dbReference type="InterPro" id="IPR048300">
    <property type="entry name" value="TACO1_YebC-like_2nd/3rd_dom"/>
</dbReference>
<dbReference type="InterPro" id="IPR049083">
    <property type="entry name" value="TACO1_YebC_N"/>
</dbReference>
<dbReference type="InterPro" id="IPR002876">
    <property type="entry name" value="Transcrip_reg_TACO1-like"/>
</dbReference>
<dbReference type="InterPro" id="IPR026564">
    <property type="entry name" value="Transcrip_reg_TACO1-like_dom3"/>
</dbReference>
<dbReference type="InterPro" id="IPR029072">
    <property type="entry name" value="YebC-like"/>
</dbReference>
<dbReference type="NCBIfam" id="NF001030">
    <property type="entry name" value="PRK00110.1"/>
    <property type="match status" value="1"/>
</dbReference>
<dbReference type="NCBIfam" id="NF009044">
    <property type="entry name" value="PRK12378.1"/>
    <property type="match status" value="1"/>
</dbReference>
<dbReference type="NCBIfam" id="TIGR01033">
    <property type="entry name" value="YebC/PmpR family DNA-binding transcriptional regulator"/>
    <property type="match status" value="1"/>
</dbReference>
<dbReference type="PANTHER" id="PTHR12532:SF6">
    <property type="entry name" value="TRANSCRIPTIONAL REGULATORY PROTEIN YEBC-RELATED"/>
    <property type="match status" value="1"/>
</dbReference>
<dbReference type="PANTHER" id="PTHR12532">
    <property type="entry name" value="TRANSLATIONAL ACTIVATOR OF CYTOCHROME C OXIDASE 1"/>
    <property type="match status" value="1"/>
</dbReference>
<dbReference type="Pfam" id="PF20772">
    <property type="entry name" value="TACO1_YebC_N"/>
    <property type="match status" value="1"/>
</dbReference>
<dbReference type="Pfam" id="PF01709">
    <property type="entry name" value="Transcrip_reg"/>
    <property type="match status" value="1"/>
</dbReference>
<dbReference type="SUPFAM" id="SSF75625">
    <property type="entry name" value="YebC-like"/>
    <property type="match status" value="1"/>
</dbReference>
<feature type="chain" id="PRO_1000132160" description="Probable transcriptional regulatory protein Bpet3099">
    <location>
        <begin position="1"/>
        <end position="243"/>
    </location>
</feature>
<feature type="region of interest" description="Disordered" evidence="2">
    <location>
        <begin position="1"/>
        <end position="21"/>
    </location>
</feature>
<keyword id="KW-0963">Cytoplasm</keyword>
<keyword id="KW-0238">DNA-binding</keyword>
<keyword id="KW-0804">Transcription</keyword>
<keyword id="KW-0805">Transcription regulation</keyword>
<evidence type="ECO:0000255" key="1">
    <source>
        <dbReference type="HAMAP-Rule" id="MF_00693"/>
    </source>
</evidence>
<evidence type="ECO:0000256" key="2">
    <source>
        <dbReference type="SAM" id="MobiDB-lite"/>
    </source>
</evidence>
<comment type="subcellular location">
    <subcellularLocation>
        <location evidence="1">Cytoplasm</location>
    </subcellularLocation>
</comment>
<comment type="similarity">
    <text evidence="1">Belongs to the TACO1 family.</text>
</comment>
<name>Y3099_BORPD</name>
<protein>
    <recommendedName>
        <fullName evidence="1">Probable transcriptional regulatory protein Bpet3099</fullName>
    </recommendedName>
</protein>
<sequence>MAGHSKWANIQHRKGRQDAKRGKLWTKIIREITVAARAGGPDPDSNPRLRMAWDKATDANMPKDNIQRAIQRGAGGADGANYEEVRYEGYGIGGAAVIVDCMTDNRTRTVAEVRHAFAKNGGNLGQEGSVAFMFKHCGQFVFAPGTAEDVVMEAALEAGAEDVTTDDEGVIEVICAPADYAAVRQAFEAAGLKAEVEGIIMKPQNETELTGEDAVKMQKLLDALEGLDDVQEVYTTVVFDEAQ</sequence>
<reference key="1">
    <citation type="journal article" date="2008" name="BMC Genomics">
        <title>The missing link: Bordetella petrii is endowed with both the metabolic versatility of environmental bacteria and virulence traits of pathogenic Bordetellae.</title>
        <authorList>
            <person name="Gross R."/>
            <person name="Guzman C.A."/>
            <person name="Sebaihia M."/>
            <person name="Martin dos Santos V.A.P."/>
            <person name="Pieper D.H."/>
            <person name="Koebnik R."/>
            <person name="Lechner M."/>
            <person name="Bartels D."/>
            <person name="Buhrmester J."/>
            <person name="Choudhuri J.V."/>
            <person name="Ebensen T."/>
            <person name="Gaigalat L."/>
            <person name="Herrmann S."/>
            <person name="Khachane A.N."/>
            <person name="Larisch C."/>
            <person name="Link S."/>
            <person name="Linke B."/>
            <person name="Meyer F."/>
            <person name="Mormann S."/>
            <person name="Nakunst D."/>
            <person name="Rueckert C."/>
            <person name="Schneiker-Bekel S."/>
            <person name="Schulze K."/>
            <person name="Voerholter F.-J."/>
            <person name="Yevsa T."/>
            <person name="Engle J.T."/>
            <person name="Goldman W.E."/>
            <person name="Puehler A."/>
            <person name="Goebel U.B."/>
            <person name="Goesmann A."/>
            <person name="Bloecker H."/>
            <person name="Kaiser O."/>
            <person name="Martinez-Arias R."/>
        </authorList>
    </citation>
    <scope>NUCLEOTIDE SEQUENCE [LARGE SCALE GENOMIC DNA]</scope>
    <source>
        <strain>ATCC BAA-461 / DSM 12804 / CCUG 43448</strain>
    </source>
</reference>
<accession>A9ITM2</accession>